<evidence type="ECO:0000255" key="1">
    <source>
        <dbReference type="HAMAP-Rule" id="MF_01694"/>
    </source>
</evidence>
<evidence type="ECO:0000255" key="2">
    <source>
        <dbReference type="PROSITE-ProRule" id="PRU01266"/>
    </source>
</evidence>
<dbReference type="EC" id="2.8.1.6" evidence="1"/>
<dbReference type="EMBL" id="CP000728">
    <property type="protein sequence ID" value="ABS42726.1"/>
    <property type="molecule type" value="Genomic_DNA"/>
</dbReference>
<dbReference type="RefSeq" id="WP_012100230.1">
    <property type="nucleotide sequence ID" value="NC_009699.1"/>
</dbReference>
<dbReference type="SMR" id="A7GFJ9"/>
<dbReference type="KEGG" id="cbf:CLI_2309"/>
<dbReference type="HOGENOM" id="CLU_033172_2_1_9"/>
<dbReference type="UniPathway" id="UPA00078">
    <property type="reaction ID" value="UER00162"/>
</dbReference>
<dbReference type="Proteomes" id="UP000002410">
    <property type="component" value="Chromosome"/>
</dbReference>
<dbReference type="GO" id="GO:0051537">
    <property type="term" value="F:2 iron, 2 sulfur cluster binding"/>
    <property type="evidence" value="ECO:0007669"/>
    <property type="project" value="UniProtKB-KW"/>
</dbReference>
<dbReference type="GO" id="GO:0051539">
    <property type="term" value="F:4 iron, 4 sulfur cluster binding"/>
    <property type="evidence" value="ECO:0007669"/>
    <property type="project" value="UniProtKB-KW"/>
</dbReference>
<dbReference type="GO" id="GO:0004076">
    <property type="term" value="F:biotin synthase activity"/>
    <property type="evidence" value="ECO:0007669"/>
    <property type="project" value="UniProtKB-UniRule"/>
</dbReference>
<dbReference type="GO" id="GO:0005506">
    <property type="term" value="F:iron ion binding"/>
    <property type="evidence" value="ECO:0007669"/>
    <property type="project" value="UniProtKB-UniRule"/>
</dbReference>
<dbReference type="GO" id="GO:0009102">
    <property type="term" value="P:biotin biosynthetic process"/>
    <property type="evidence" value="ECO:0007669"/>
    <property type="project" value="UniProtKB-UniRule"/>
</dbReference>
<dbReference type="CDD" id="cd01335">
    <property type="entry name" value="Radical_SAM"/>
    <property type="match status" value="1"/>
</dbReference>
<dbReference type="FunFam" id="3.20.20.70:FF:000026">
    <property type="entry name" value="Biotin synthase"/>
    <property type="match status" value="1"/>
</dbReference>
<dbReference type="Gene3D" id="3.20.20.70">
    <property type="entry name" value="Aldolase class I"/>
    <property type="match status" value="1"/>
</dbReference>
<dbReference type="HAMAP" id="MF_01694">
    <property type="entry name" value="BioB"/>
    <property type="match status" value="1"/>
</dbReference>
<dbReference type="InterPro" id="IPR013785">
    <property type="entry name" value="Aldolase_TIM"/>
</dbReference>
<dbReference type="InterPro" id="IPR010722">
    <property type="entry name" value="BATS_dom"/>
</dbReference>
<dbReference type="InterPro" id="IPR002684">
    <property type="entry name" value="Biotin_synth/BioAB"/>
</dbReference>
<dbReference type="InterPro" id="IPR024177">
    <property type="entry name" value="Biotin_synthase"/>
</dbReference>
<dbReference type="InterPro" id="IPR006638">
    <property type="entry name" value="Elp3/MiaA/NifB-like_rSAM"/>
</dbReference>
<dbReference type="InterPro" id="IPR007197">
    <property type="entry name" value="rSAM"/>
</dbReference>
<dbReference type="NCBIfam" id="TIGR00433">
    <property type="entry name" value="bioB"/>
    <property type="match status" value="1"/>
</dbReference>
<dbReference type="PANTHER" id="PTHR22976">
    <property type="entry name" value="BIOTIN SYNTHASE"/>
    <property type="match status" value="1"/>
</dbReference>
<dbReference type="PANTHER" id="PTHR22976:SF2">
    <property type="entry name" value="BIOTIN SYNTHASE, MITOCHONDRIAL"/>
    <property type="match status" value="1"/>
</dbReference>
<dbReference type="Pfam" id="PF06968">
    <property type="entry name" value="BATS"/>
    <property type="match status" value="1"/>
</dbReference>
<dbReference type="Pfam" id="PF04055">
    <property type="entry name" value="Radical_SAM"/>
    <property type="match status" value="1"/>
</dbReference>
<dbReference type="PIRSF" id="PIRSF001619">
    <property type="entry name" value="Biotin_synth"/>
    <property type="match status" value="1"/>
</dbReference>
<dbReference type="SFLD" id="SFLDG01060">
    <property type="entry name" value="BATS_domain_containing"/>
    <property type="match status" value="1"/>
</dbReference>
<dbReference type="SFLD" id="SFLDG01278">
    <property type="entry name" value="biotin_synthase_like"/>
    <property type="match status" value="1"/>
</dbReference>
<dbReference type="SMART" id="SM00876">
    <property type="entry name" value="BATS"/>
    <property type="match status" value="1"/>
</dbReference>
<dbReference type="SMART" id="SM00729">
    <property type="entry name" value="Elp3"/>
    <property type="match status" value="1"/>
</dbReference>
<dbReference type="SUPFAM" id="SSF102114">
    <property type="entry name" value="Radical SAM enzymes"/>
    <property type="match status" value="1"/>
</dbReference>
<dbReference type="PROSITE" id="PS51918">
    <property type="entry name" value="RADICAL_SAM"/>
    <property type="match status" value="1"/>
</dbReference>
<comment type="function">
    <text evidence="1">Catalyzes the conversion of dethiobiotin (DTB) to biotin by the insertion of a sulfur atom into dethiobiotin via a radical-based mechanism.</text>
</comment>
<comment type="catalytic activity">
    <reaction evidence="1">
        <text>(4R,5S)-dethiobiotin + (sulfur carrier)-SH + 2 reduced [2Fe-2S]-[ferredoxin] + 2 S-adenosyl-L-methionine = (sulfur carrier)-H + biotin + 2 5'-deoxyadenosine + 2 L-methionine + 2 oxidized [2Fe-2S]-[ferredoxin]</text>
        <dbReference type="Rhea" id="RHEA:22060"/>
        <dbReference type="Rhea" id="RHEA-COMP:10000"/>
        <dbReference type="Rhea" id="RHEA-COMP:10001"/>
        <dbReference type="Rhea" id="RHEA-COMP:14737"/>
        <dbReference type="Rhea" id="RHEA-COMP:14739"/>
        <dbReference type="ChEBI" id="CHEBI:17319"/>
        <dbReference type="ChEBI" id="CHEBI:29917"/>
        <dbReference type="ChEBI" id="CHEBI:33737"/>
        <dbReference type="ChEBI" id="CHEBI:33738"/>
        <dbReference type="ChEBI" id="CHEBI:57586"/>
        <dbReference type="ChEBI" id="CHEBI:57844"/>
        <dbReference type="ChEBI" id="CHEBI:59789"/>
        <dbReference type="ChEBI" id="CHEBI:64428"/>
        <dbReference type="ChEBI" id="CHEBI:149473"/>
        <dbReference type="EC" id="2.8.1.6"/>
    </reaction>
</comment>
<comment type="cofactor">
    <cofactor evidence="1">
        <name>[4Fe-4S] cluster</name>
        <dbReference type="ChEBI" id="CHEBI:49883"/>
    </cofactor>
    <text evidence="1">Binds 1 [4Fe-4S] cluster. The cluster is coordinated with 3 cysteines and an exchangeable S-adenosyl-L-methionine.</text>
</comment>
<comment type="cofactor">
    <cofactor evidence="1">
        <name>[2Fe-2S] cluster</name>
        <dbReference type="ChEBI" id="CHEBI:190135"/>
    </cofactor>
    <text evidence="1">Binds 1 [2Fe-2S] cluster. The cluster is coordinated with 3 cysteines and 1 arginine.</text>
</comment>
<comment type="pathway">
    <text evidence="1">Cofactor biosynthesis; biotin biosynthesis; biotin from 7,8-diaminononanoate: step 2/2.</text>
</comment>
<comment type="subunit">
    <text evidence="1">Homodimer.</text>
</comment>
<comment type="similarity">
    <text evidence="1">Belongs to the radical SAM superfamily. Biotin synthase family.</text>
</comment>
<protein>
    <recommendedName>
        <fullName evidence="1">Biotin synthase</fullName>
        <ecNumber evidence="1">2.8.1.6</ecNumber>
    </recommendedName>
</protein>
<keyword id="KW-0001">2Fe-2S</keyword>
<keyword id="KW-0004">4Fe-4S</keyword>
<keyword id="KW-0093">Biotin biosynthesis</keyword>
<keyword id="KW-0408">Iron</keyword>
<keyword id="KW-0411">Iron-sulfur</keyword>
<keyword id="KW-0479">Metal-binding</keyword>
<keyword id="KW-0949">S-adenosyl-L-methionine</keyword>
<keyword id="KW-0808">Transferase</keyword>
<name>BIOB_CLOBL</name>
<organism>
    <name type="scientific">Clostridium botulinum (strain Langeland / NCTC 10281 / Type F)</name>
    <dbReference type="NCBI Taxonomy" id="441772"/>
    <lineage>
        <taxon>Bacteria</taxon>
        <taxon>Bacillati</taxon>
        <taxon>Bacillota</taxon>
        <taxon>Clostridia</taxon>
        <taxon>Eubacteriales</taxon>
        <taxon>Clostridiaceae</taxon>
        <taxon>Clostridium</taxon>
    </lineage>
</organism>
<feature type="chain" id="PRO_0000381315" description="Biotin synthase">
    <location>
        <begin position="1"/>
        <end position="318"/>
    </location>
</feature>
<feature type="domain" description="Radical SAM core" evidence="2">
    <location>
        <begin position="44"/>
        <end position="273"/>
    </location>
</feature>
<feature type="binding site" evidence="1">
    <location>
        <position position="62"/>
    </location>
    <ligand>
        <name>[4Fe-4S] cluster</name>
        <dbReference type="ChEBI" id="CHEBI:49883"/>
        <note>4Fe-4S-S-AdoMet</note>
    </ligand>
</feature>
<feature type="binding site" evidence="1">
    <location>
        <position position="66"/>
    </location>
    <ligand>
        <name>[4Fe-4S] cluster</name>
        <dbReference type="ChEBI" id="CHEBI:49883"/>
        <note>4Fe-4S-S-AdoMet</note>
    </ligand>
</feature>
<feature type="binding site" evidence="1">
    <location>
        <position position="69"/>
    </location>
    <ligand>
        <name>[4Fe-4S] cluster</name>
        <dbReference type="ChEBI" id="CHEBI:49883"/>
        <note>4Fe-4S-S-AdoMet</note>
    </ligand>
</feature>
<feature type="binding site" evidence="1">
    <location>
        <position position="106"/>
    </location>
    <ligand>
        <name>[2Fe-2S] cluster</name>
        <dbReference type="ChEBI" id="CHEBI:190135"/>
    </ligand>
</feature>
<feature type="binding site" evidence="1">
    <location>
        <position position="138"/>
    </location>
    <ligand>
        <name>[2Fe-2S] cluster</name>
        <dbReference type="ChEBI" id="CHEBI:190135"/>
    </ligand>
</feature>
<feature type="binding site" evidence="1">
    <location>
        <position position="198"/>
    </location>
    <ligand>
        <name>[2Fe-2S] cluster</name>
        <dbReference type="ChEBI" id="CHEBI:190135"/>
    </ligand>
</feature>
<feature type="binding site" evidence="1">
    <location>
        <position position="268"/>
    </location>
    <ligand>
        <name>[2Fe-2S] cluster</name>
        <dbReference type="ChEBI" id="CHEBI:190135"/>
    </ligand>
</feature>
<reference key="1">
    <citation type="submission" date="2007-06" db="EMBL/GenBank/DDBJ databases">
        <authorList>
            <person name="Brinkac L.M."/>
            <person name="Daugherty S."/>
            <person name="Dodson R.J."/>
            <person name="Madupu R."/>
            <person name="Brown J.L."/>
            <person name="Bruce D."/>
            <person name="Detter C."/>
            <person name="Munk C."/>
            <person name="Smith L.A."/>
            <person name="Smith T.J."/>
            <person name="White O."/>
            <person name="Brettin T.S."/>
        </authorList>
    </citation>
    <scope>NUCLEOTIDE SEQUENCE [LARGE SCALE GENOMIC DNA]</scope>
    <source>
        <strain>Langeland / NCTC 10281 / Type F</strain>
    </source>
</reference>
<gene>
    <name evidence="1" type="primary">bioB</name>
    <name type="ordered locus">CLI_2309</name>
</gene>
<accession>A7GFJ9</accession>
<proteinExistence type="inferred from homology"/>
<sequence>MSNIIKYKKKILNGDLLTKEEVEEILEEDITDLAATANEIRESLCGNKFDLCTIINGKSGRCQENCKYCAQSAHFDTDIIEYNILNSDRIINSAISNYNKGVHRFSVVTSGRALNNNEVDTLCKTYSKLKETCSIRLCASHGLLKYEDLKRLKDSGVTRYHNNLETSRKFFTKICTTHKYDDKIETIKNAKKAGLEICSGGIIGLGETMEDRIDMAFTLRELSVESVPVNILNPIKGTPLENQEILSYEEIIKTLALFRFILPTVQIRLAGGRTIISDNGKKALESGVNGAISGDMLTTLGIETSEDIKMIKNLGFEV</sequence>